<dbReference type="EC" id="2.1.1.-" evidence="2 3 4 5"/>
<dbReference type="EC" id="2.1.1.345" evidence="2 3 4 5"/>
<dbReference type="EMBL" id="KY984100">
    <property type="protein sequence ID" value="ASU62238.1"/>
    <property type="molecule type" value="mRNA"/>
</dbReference>
<dbReference type="PDB" id="8PB3">
    <property type="method" value="X-ray"/>
    <property type="resolution" value="1.18 A"/>
    <property type="chains" value="A/B=1-309"/>
</dbReference>
<dbReference type="PDB" id="8PB4">
    <property type="method" value="X-ray"/>
    <property type="resolution" value="0.91 A"/>
    <property type="chains" value="A=1-309"/>
</dbReference>
<dbReference type="PDB" id="8PB5">
    <property type="method" value="X-ray"/>
    <property type="resolution" value="0.89 A"/>
    <property type="chains" value="A=1-309"/>
</dbReference>
<dbReference type="PDB" id="8PB6">
    <property type="method" value="X-ray"/>
    <property type="resolution" value="0.93 A"/>
    <property type="chains" value="A=1-309"/>
</dbReference>
<dbReference type="PDB" id="8PB7">
    <property type="method" value="X-ray"/>
    <property type="resolution" value="0.92 A"/>
    <property type="chains" value="A=1-309"/>
</dbReference>
<dbReference type="PDB" id="8PB8">
    <property type="method" value="X-ray"/>
    <property type="resolution" value="2.53 A"/>
    <property type="chains" value="A/B=1-309"/>
</dbReference>
<dbReference type="PDB" id="8QXQ">
    <property type="method" value="X-ray"/>
    <property type="resolution" value="0.94 A"/>
    <property type="chains" value="A=1-309"/>
</dbReference>
<dbReference type="PDB" id="9FMH">
    <property type="method" value="X-ray"/>
    <property type="resolution" value="0.90 A"/>
    <property type="chains" value="A=1-309"/>
</dbReference>
<dbReference type="PDB" id="9FMI">
    <property type="method" value="X-ray"/>
    <property type="resolution" value="0.90 A"/>
    <property type="chains" value="A=1-309"/>
</dbReference>
<dbReference type="PDB" id="9FMJ">
    <property type="method" value="X-ray"/>
    <property type="resolution" value="0.95 A"/>
    <property type="chains" value="A=1-309"/>
</dbReference>
<dbReference type="PDB" id="9FMK">
    <property type="method" value="X-ray"/>
    <property type="resolution" value="1.01 A"/>
    <property type="chains" value="A=1-309"/>
</dbReference>
<dbReference type="PDB" id="9GR6">
    <property type="method" value="X-ray"/>
    <property type="resolution" value="0.93 A"/>
    <property type="chains" value="A=1-309"/>
</dbReference>
<dbReference type="PDB" id="9GR7">
    <property type="method" value="X-ray"/>
    <property type="resolution" value="1.04 A"/>
    <property type="chains" value="A=1-309"/>
</dbReference>
<dbReference type="PDBsum" id="8PB3"/>
<dbReference type="PDBsum" id="8PB4"/>
<dbReference type="PDBsum" id="8PB5"/>
<dbReference type="PDBsum" id="8PB6"/>
<dbReference type="PDBsum" id="8PB7"/>
<dbReference type="PDBsum" id="8PB8"/>
<dbReference type="PDBsum" id="8QXQ"/>
<dbReference type="PDBsum" id="9FMH"/>
<dbReference type="PDBsum" id="9FMI"/>
<dbReference type="PDBsum" id="9FMJ"/>
<dbReference type="PDBsum" id="9FMK"/>
<dbReference type="PDBsum" id="9GR6"/>
<dbReference type="PDBsum" id="9GR7"/>
<dbReference type="SMR" id="P0DPA9"/>
<dbReference type="KEGG" id="ag:ASU62238"/>
<dbReference type="BRENDA" id="2.1.1.345">
    <property type="organism ID" value="15552"/>
</dbReference>
<dbReference type="GO" id="GO:0005634">
    <property type="term" value="C:nucleus"/>
    <property type="evidence" value="ECO:0007669"/>
    <property type="project" value="TreeGrafter"/>
</dbReference>
<dbReference type="GO" id="GO:0140381">
    <property type="term" value="F:4-hydroxytryptamine 4-phosphate methyltransferase activity"/>
    <property type="evidence" value="ECO:0000314"/>
    <property type="project" value="UniProt"/>
</dbReference>
<dbReference type="GO" id="GO:0140380">
    <property type="term" value="P:psilocybin biosynthetic process"/>
    <property type="evidence" value="ECO:0000314"/>
    <property type="project" value="GO_Central"/>
</dbReference>
<dbReference type="GO" id="GO:0070475">
    <property type="term" value="P:rRNA base methylation"/>
    <property type="evidence" value="ECO:0007669"/>
    <property type="project" value="TreeGrafter"/>
</dbReference>
<dbReference type="Gene3D" id="3.40.50.150">
    <property type="entry name" value="Vaccinia Virus protein VP39"/>
    <property type="match status" value="1"/>
</dbReference>
<dbReference type="InterPro" id="IPR017182">
    <property type="entry name" value="METTL16/PsiM"/>
</dbReference>
<dbReference type="InterPro" id="IPR010286">
    <property type="entry name" value="METTL16/RlmF"/>
</dbReference>
<dbReference type="InterPro" id="IPR029063">
    <property type="entry name" value="SAM-dependent_MTases_sf"/>
</dbReference>
<dbReference type="PANTHER" id="PTHR13393:SF0">
    <property type="entry name" value="RNA N6-ADENOSINE-METHYLTRANSFERASE METTL16"/>
    <property type="match status" value="1"/>
</dbReference>
<dbReference type="PANTHER" id="PTHR13393">
    <property type="entry name" value="SAM-DEPENDENT METHYLTRANSFERASE"/>
    <property type="match status" value="1"/>
</dbReference>
<dbReference type="Pfam" id="PF05971">
    <property type="entry name" value="Methyltransf_10"/>
    <property type="match status" value="1"/>
</dbReference>
<dbReference type="PIRSF" id="PIRSF037350">
    <property type="entry name" value="Mtase_ZK1128_prd"/>
    <property type="match status" value="1"/>
</dbReference>
<dbReference type="SUPFAM" id="SSF53335">
    <property type="entry name" value="S-adenosyl-L-methionine-dependent methyltransferases"/>
    <property type="match status" value="1"/>
</dbReference>
<accession>P0DPA9</accession>
<organism>
    <name type="scientific">Psilocybe cubensis</name>
    <name type="common">Psychedelic mushroom</name>
    <name type="synonym">Stropharia cubensis</name>
    <dbReference type="NCBI Taxonomy" id="181762"/>
    <lineage>
        <taxon>Eukaryota</taxon>
        <taxon>Fungi</taxon>
        <taxon>Dikarya</taxon>
        <taxon>Basidiomycota</taxon>
        <taxon>Agaricomycotina</taxon>
        <taxon>Agaricomycetes</taxon>
        <taxon>Agaricomycetidae</taxon>
        <taxon>Agaricales</taxon>
        <taxon>Agaricineae</taxon>
        <taxon>Strophariaceae</taxon>
        <taxon>Psilocybe</taxon>
    </lineage>
</organism>
<feature type="chain" id="PRO_0000442160" description="Psilocybin synthase">
    <location>
        <begin position="1"/>
        <end position="309"/>
    </location>
</feature>
<feature type="short sequence motif" description="NPPF" evidence="5">
    <location>
        <begin position="183"/>
        <end position="186"/>
    </location>
</feature>
<feature type="binding site" evidence="4 8">
    <location>
        <position position="58"/>
    </location>
    <ligand>
        <name>Mg(2+)</name>
        <dbReference type="ChEBI" id="CHEBI:18420"/>
        <label>1</label>
    </ligand>
</feature>
<feature type="binding site" evidence="4 11 12">
    <location>
        <position position="75"/>
    </location>
    <ligand>
        <name>baeocystin</name>
        <dbReference type="ChEBI" id="CHEBI:139071"/>
    </ligand>
</feature>
<feature type="binding site" evidence="4 5 8 9 10 15 16">
    <location>
        <position position="75"/>
    </location>
    <ligand>
        <name>norbaeocystin</name>
        <dbReference type="ChEBI" id="CHEBI:139070"/>
    </ligand>
</feature>
<feature type="binding site" evidence="4 5 8 9 11 13 14 15 16">
    <location>
        <position position="75"/>
    </location>
    <ligand>
        <name>S-adenosyl-L-homocysteine</name>
        <dbReference type="ChEBI" id="CHEBI:57856"/>
    </ligand>
</feature>
<feature type="binding site" evidence="4 5 8 9 11 13 14 15 16">
    <location>
        <position position="107"/>
    </location>
    <ligand>
        <name>S-adenosyl-L-homocysteine</name>
        <dbReference type="ChEBI" id="CHEBI:57856"/>
    </ligand>
</feature>
<feature type="binding site" evidence="4 5 8 9 11 13 14 15 16">
    <location>
        <position position="131"/>
    </location>
    <ligand>
        <name>S-adenosyl-L-homocysteine</name>
        <dbReference type="ChEBI" id="CHEBI:57856"/>
    </ligand>
</feature>
<feature type="binding site" evidence="4 5 8 9 11 14 15 16">
    <location>
        <position position="158"/>
    </location>
    <ligand>
        <name>S-adenosyl-L-homocysteine</name>
        <dbReference type="ChEBI" id="CHEBI:57856"/>
    </ligand>
</feature>
<feature type="binding site" evidence="4 11 12">
    <location>
        <position position="183"/>
    </location>
    <ligand>
        <name>baeocystin</name>
        <dbReference type="ChEBI" id="CHEBI:139071"/>
    </ligand>
</feature>
<feature type="binding site" evidence="4 5 8 9 10 15 16">
    <location>
        <position position="183"/>
    </location>
    <ligand>
        <name>norbaeocystin</name>
        <dbReference type="ChEBI" id="CHEBI:139070"/>
    </ligand>
</feature>
<feature type="binding site" evidence="4 5 8 9 11 13 14 15 16">
    <location>
        <position position="183"/>
    </location>
    <ligand>
        <name>S-adenosyl-L-homocysteine</name>
        <dbReference type="ChEBI" id="CHEBI:57856"/>
    </ligand>
</feature>
<feature type="binding site" evidence="4 11 12">
    <location>
        <position position="184"/>
    </location>
    <ligand>
        <name>baeocystin</name>
        <dbReference type="ChEBI" id="CHEBI:139071"/>
    </ligand>
</feature>
<feature type="binding site" evidence="4 5 8 9 10 15 16">
    <location>
        <position position="184"/>
    </location>
    <ligand>
        <name>norbaeocystin</name>
        <dbReference type="ChEBI" id="CHEBI:139070"/>
    </ligand>
</feature>
<feature type="binding site" evidence="4 11 12">
    <location>
        <position position="187"/>
    </location>
    <ligand>
        <name>baeocystin</name>
        <dbReference type="ChEBI" id="CHEBI:139071"/>
    </ligand>
</feature>
<feature type="binding site" evidence="4 5 8 9 10">
    <location>
        <position position="187"/>
    </location>
    <ligand>
        <name>norbaeocystin</name>
        <dbReference type="ChEBI" id="CHEBI:139070"/>
    </ligand>
</feature>
<feature type="binding site" evidence="4 11 12">
    <location>
        <position position="203"/>
    </location>
    <ligand>
        <name>baeocystin</name>
        <dbReference type="ChEBI" id="CHEBI:139071"/>
    </ligand>
</feature>
<feature type="binding site" evidence="4 5 8 9 10 15 16">
    <location>
        <position position="203"/>
    </location>
    <ligand>
        <name>norbaeocystin</name>
        <dbReference type="ChEBI" id="CHEBI:139070"/>
    </ligand>
</feature>
<feature type="binding site" evidence="4 8">
    <location>
        <position position="272"/>
    </location>
    <ligand>
        <name>Mg(2+)</name>
        <dbReference type="ChEBI" id="CHEBI:18420"/>
        <label>2</label>
    </ligand>
</feature>
<feature type="binding site" evidence="4 11 12">
    <location>
        <position position="281"/>
    </location>
    <ligand>
        <name>baeocystin</name>
        <dbReference type="ChEBI" id="CHEBI:139071"/>
    </ligand>
</feature>
<feature type="binding site" evidence="4 5 8 9 10 15 16">
    <location>
        <position position="281"/>
    </location>
    <ligand>
        <name>norbaeocystin</name>
        <dbReference type="ChEBI" id="CHEBI:139070"/>
    </ligand>
</feature>
<feature type="mutagenesis site" description="Impairs the catalytic actovity." evidence="3">
    <original>R</original>
    <variation>A</variation>
    <location>
        <position position="75"/>
    </location>
</feature>
<feature type="mutagenesis site" description="Does not affect the catalytic actovity." evidence="3">
    <original>D</original>
    <variation>A</variation>
    <location>
        <position position="161"/>
    </location>
</feature>
<feature type="mutagenesis site" description="Impairs the catalytic actovity." evidence="3">
    <original>N</original>
    <variation>A</variation>
    <location>
        <position position="183"/>
    </location>
</feature>
<feature type="mutagenesis site" description="Impairs the catalytic actovity." evidence="3">
    <original>Y</original>
    <variation>A</variation>
    <location>
        <position position="187"/>
    </location>
</feature>
<feature type="mutagenesis site" description="Impairs the catalytic actovity." evidence="3">
    <original>S</original>
    <variation>A</variation>
    <location>
        <position position="196"/>
    </location>
</feature>
<feature type="mutagenesis site" description="Retains the ability to convert norbaeocystin into baeocystin psylocybion but impairs the ability to convert baeocystin into psylocybin." evidence="3">
    <original>H</original>
    <variation>A</variation>
    <location>
        <position position="210"/>
    </location>
</feature>
<feature type="mutagenesis site" description="Retains its ability to methylate norbaeocystin to baeocystin, but fails to produce the dimethylated product psilocybin." evidence="4 5">
    <original>N</original>
    <variation>A</variation>
    <variation>M</variation>
    <location>
        <position position="247"/>
    </location>
</feature>
<feature type="helix" evidence="19">
    <location>
        <begin position="6"/>
        <end position="8"/>
    </location>
</feature>
<feature type="helix" evidence="19">
    <location>
        <begin position="13"/>
        <end position="19"/>
    </location>
</feature>
<feature type="helix" evidence="19">
    <location>
        <begin position="21"/>
        <end position="26"/>
    </location>
</feature>
<feature type="strand" evidence="19">
    <location>
        <begin position="27"/>
        <end position="29"/>
    </location>
</feature>
<feature type="strand" evidence="20">
    <location>
        <begin position="31"/>
        <end position="33"/>
    </location>
</feature>
<feature type="strand" evidence="19">
    <location>
        <begin position="35"/>
        <end position="37"/>
    </location>
</feature>
<feature type="helix" evidence="19">
    <location>
        <begin position="42"/>
        <end position="57"/>
    </location>
</feature>
<feature type="strand" evidence="20">
    <location>
        <begin position="65"/>
        <end position="67"/>
    </location>
</feature>
<feature type="helix" evidence="19">
    <location>
        <begin position="72"/>
        <end position="93"/>
    </location>
</feature>
<feature type="strand" evidence="19">
    <location>
        <begin position="101"/>
        <end position="107"/>
    </location>
</feature>
<feature type="turn" evidence="19">
    <location>
        <begin position="109"/>
        <end position="112"/>
    </location>
</feature>
<feature type="helix" evidence="19">
    <location>
        <begin position="113"/>
        <end position="121"/>
    </location>
</feature>
<feature type="strand" evidence="19">
    <location>
        <begin position="125"/>
        <end position="131"/>
    </location>
</feature>
<feature type="helix" evidence="19">
    <location>
        <begin position="134"/>
        <end position="146"/>
    </location>
</feature>
<feature type="turn" evidence="19">
    <location>
        <begin position="150"/>
        <end position="152"/>
    </location>
</feature>
<feature type="strand" evidence="19">
    <location>
        <begin position="153"/>
        <end position="157"/>
    </location>
</feature>
<feature type="helix" evidence="19">
    <location>
        <begin position="166"/>
        <end position="170"/>
    </location>
</feature>
<feature type="strand" evidence="19">
    <location>
        <begin position="176"/>
        <end position="182"/>
    </location>
</feature>
<feature type="helix" evidence="19">
    <location>
        <begin position="189"/>
        <end position="195"/>
    </location>
</feature>
<feature type="turn" evidence="19">
    <location>
        <begin position="198"/>
        <end position="201"/>
    </location>
</feature>
<feature type="helix" evidence="19">
    <location>
        <begin position="214"/>
        <end position="217"/>
    </location>
</feature>
<feature type="helix" evidence="19">
    <location>
        <begin position="222"/>
        <end position="234"/>
    </location>
</feature>
<feature type="turn" evidence="19">
    <location>
        <begin position="235"/>
        <end position="237"/>
    </location>
</feature>
<feature type="helix" evidence="19">
    <location>
        <begin position="238"/>
        <end position="240"/>
    </location>
</feature>
<feature type="strand" evidence="19">
    <location>
        <begin position="241"/>
        <end position="249"/>
    </location>
</feature>
<feature type="helix" evidence="19">
    <location>
        <begin position="251"/>
        <end position="263"/>
    </location>
</feature>
<feature type="strand" evidence="19">
    <location>
        <begin position="268"/>
        <end position="276"/>
    </location>
</feature>
<feature type="strand" evidence="19">
    <location>
        <begin position="279"/>
        <end position="289"/>
    </location>
</feature>
<feature type="helix" evidence="19">
    <location>
        <begin position="295"/>
        <end position="298"/>
    </location>
</feature>
<feature type="helix" evidence="19">
    <location>
        <begin position="303"/>
        <end position="308"/>
    </location>
</feature>
<name>PSIM_PSICU</name>
<evidence type="ECO:0000269" key="1">
    <source>
    </source>
</evidence>
<evidence type="ECO:0000269" key="2">
    <source>
    </source>
</evidence>
<evidence type="ECO:0000269" key="3">
    <source>
    </source>
</evidence>
<evidence type="ECO:0000269" key="4">
    <source>
    </source>
</evidence>
<evidence type="ECO:0000269" key="5">
    <source>
    </source>
</evidence>
<evidence type="ECO:0000303" key="6">
    <source>
    </source>
</evidence>
<evidence type="ECO:0000305" key="7"/>
<evidence type="ECO:0007744" key="8">
    <source>
        <dbReference type="PDB" id="8PB3"/>
    </source>
</evidence>
<evidence type="ECO:0007744" key="9">
    <source>
        <dbReference type="PDB" id="8PB4"/>
    </source>
</evidence>
<evidence type="ECO:0007744" key="10">
    <source>
        <dbReference type="PDB" id="8PB5"/>
    </source>
</evidence>
<evidence type="ECO:0007744" key="11">
    <source>
        <dbReference type="PDB" id="8PB6"/>
    </source>
</evidence>
<evidence type="ECO:0007744" key="12">
    <source>
        <dbReference type="PDB" id="8PB7"/>
    </source>
</evidence>
<evidence type="ECO:0007744" key="13">
    <source>
        <dbReference type="PDB" id="8PB8"/>
    </source>
</evidence>
<evidence type="ECO:0007744" key="14">
    <source>
        <dbReference type="PDB" id="8QXQ"/>
    </source>
</evidence>
<evidence type="ECO:0007744" key="15">
    <source>
        <dbReference type="PDB" id="9FMH"/>
    </source>
</evidence>
<evidence type="ECO:0007744" key="16">
    <source>
        <dbReference type="PDB" id="9FMI"/>
    </source>
</evidence>
<evidence type="ECO:0007744" key="17">
    <source>
        <dbReference type="PDB" id="9FMJ"/>
    </source>
</evidence>
<evidence type="ECO:0007744" key="18">
    <source>
        <dbReference type="PDB" id="9FMK"/>
    </source>
</evidence>
<evidence type="ECO:0007829" key="19">
    <source>
        <dbReference type="PDB" id="8PB5"/>
    </source>
</evidence>
<evidence type="ECO:0007829" key="20">
    <source>
        <dbReference type="PDB" id="8PB8"/>
    </source>
</evidence>
<gene>
    <name evidence="6" type="primary">psiM</name>
</gene>
<protein>
    <recommendedName>
        <fullName evidence="7">Psilocybin synthase</fullName>
        <ecNumber evidence="2 3 4 5">2.1.1.-</ecNumber>
        <ecNumber evidence="2 3 4 5">2.1.1.345</ecNumber>
    </recommendedName>
    <alternativeName>
        <fullName evidence="6">Psilocybin biosynthesis methyltransferase</fullName>
    </alternativeName>
</protein>
<keyword id="KW-0002">3D-structure</keyword>
<keyword id="KW-0489">Methyltransferase</keyword>
<keyword id="KW-0949">S-adenosyl-L-methionine</keyword>
<keyword id="KW-0808">Transferase</keyword>
<comment type="function">
    <text evidence="2 3 4 5">N-methyltransferase; part of the gene cluster that mediates the biosynthesis of psilocybin, a psychotropic tryptamine-derived natural product (PubMed:28763571, PubMed:31150155, PubMed:39413044, PubMed:38548735). The first step in the pathway is the decarboxylation of L-tryptophan to tryptamine by the decarboxylase psiD (PubMed:28763571, PubMed:31150155). 4-hydroxy-L-tryptophan is accepted as substrate by psiD as well (PubMed:28763571). The cytochrome P450 monooxygenase psiH then converts tryptamine to 4-hydroxytryptamine (PubMed:28763571). The kinase psiK catalyzes the 4-O-phosphorylation step by converting 4-hydroxytryptamine into norbaeocystin (PubMed:28763571, PubMed:31150155). The methyltransferase psiM then catalyzes iterative methyl transfer to the amino group of norbaeocystin to yield psilocybin via a monomethylated intermediate, baeocystin (PubMed:28763571, PubMed:31150155, PubMed:39413044, PubMed:38548735). 4-hydroxy-6-methyl-l-tryptophancan also be converted the decarboxylase PsiD, kinase PsiK, and methyltransferase PsiM into respectively 6-methyl-norbaeocystin, 6-methylbaeocystin, and 6-methylpsilocybin (PubMed:31150155).</text>
</comment>
<comment type="catalytic activity">
    <reaction evidence="2 3 4 5">
        <text>norbaeocystin + 2 S-adenosyl-L-methionine = psilocybin + 2 S-adenosyl-L-homocysteine + 2 H(+)</text>
        <dbReference type="Rhea" id="RHEA:55568"/>
        <dbReference type="ChEBI" id="CHEBI:15378"/>
        <dbReference type="ChEBI" id="CHEBI:57856"/>
        <dbReference type="ChEBI" id="CHEBI:59789"/>
        <dbReference type="ChEBI" id="CHEBI:139070"/>
        <dbReference type="ChEBI" id="CHEBI:139072"/>
        <dbReference type="EC" id="2.1.1.345"/>
    </reaction>
    <physiologicalReaction direction="left-to-right" evidence="2 3 4 5">
        <dbReference type="Rhea" id="RHEA:55569"/>
    </physiologicalReaction>
</comment>
<comment type="catalytic activity">
    <reaction evidence="2 3 4 5">
        <text>norbaeocystin + S-adenosyl-L-methionine = baeocystin + S-adenosyl-L-homocysteine + H(+)</text>
        <dbReference type="Rhea" id="RHEA:55572"/>
        <dbReference type="ChEBI" id="CHEBI:15378"/>
        <dbReference type="ChEBI" id="CHEBI:57856"/>
        <dbReference type="ChEBI" id="CHEBI:59789"/>
        <dbReference type="ChEBI" id="CHEBI:139070"/>
        <dbReference type="ChEBI" id="CHEBI:139071"/>
    </reaction>
    <physiologicalReaction direction="left-to-right" evidence="2 3 4 5">
        <dbReference type="Rhea" id="RHEA:55573"/>
    </physiologicalReaction>
</comment>
<comment type="catalytic activity">
    <reaction evidence="2 3 4 5">
        <text>baeocystin + S-adenosyl-L-methionine = psilocybin + S-adenosyl-L-homocysteine + H(+)</text>
        <dbReference type="Rhea" id="RHEA:55576"/>
        <dbReference type="ChEBI" id="CHEBI:15378"/>
        <dbReference type="ChEBI" id="CHEBI:57856"/>
        <dbReference type="ChEBI" id="CHEBI:59789"/>
        <dbReference type="ChEBI" id="CHEBI:139071"/>
        <dbReference type="ChEBI" id="CHEBI:139072"/>
    </reaction>
    <physiologicalReaction direction="left-to-right" evidence="2 3 4 5">
        <dbReference type="Rhea" id="RHEA:55577"/>
    </physiologicalReaction>
</comment>
<comment type="biophysicochemical properties">
    <kinetics>
        <KM evidence="4 5">575 uM for norbaeocystin</KM>
        <KM evidence="4 5">492 uM for baeocystin</KM>
    </kinetics>
</comment>
<comment type="pathway">
    <text evidence="2 4 5">Secondary metabolite biosynthesis.</text>
</comment>
<comment type="subunit">
    <text evidence="3">Monomer.</text>
</comment>
<comment type="domain">
    <text evidence="5">The conserved NPPF motif is required for catalysis and represent the basis of substrate specificity toward norbaeocystin.</text>
</comment>
<comment type="domain">
    <text evidence="5">Residue Asn-247 is essential to allow enough space in the active site for multiple methylations while also participating in a network of hydrogen bonds that stabilizes secondary structure elements in the immediate vicinity of the active site for optimal methylation of norbaeocystin.</text>
</comment>
<comment type="biotechnology">
    <text evidence="1">The pharmaceutical interesting psilocybin as a treatment option against depression and anxiety is being investigated in advanced clinical trials.</text>
</comment>
<comment type="similarity">
    <text evidence="7">Belongs to the methyltransferase superfamily. METTL16/RlmF family.</text>
</comment>
<comment type="online information" name="Protein Spotlight">
    <link uri="https://www.proteinspotlight.org/back_issues/198/"/>
    <text>When the mind bends - Issue 198 of December 2017</text>
</comment>
<sequence length="309" mass="34434">MHIRNPYRTPIDYQALSEAFPPLKPFVSVNADGTSSVDLTIPEAQRAFTAALLHRDFGLTMTIPEDRLCPTVPNRLNYVLWIEDIFNYTNKTLGLSDDRPIKGVDIGTGASAIYPMLACARFKAWSMVGTEVERKCIDTARLNVVANNLQDRLSILETSIDGPILVPIFEATEEYEYEFTMCNPPFYDGAADMQTSDAAKGFGFGVGAPHSGTVIEMSTEGGESAFVAQMVRESLKLRTRCRWYTSNLGKLKSLKEIVGLLKELEISNYAINEYVQGSTRRYAVAWSFTDIQLPEELSRPSNPELSSLF</sequence>
<reference key="1">
    <citation type="journal article" date="2017" name="Angew. Chem. Int. Ed.">
        <title>Enzymatic synthesis of psilocybin.</title>
        <authorList>
            <person name="Fricke J."/>
            <person name="Blei F."/>
            <person name="Hoffmeister D."/>
        </authorList>
    </citation>
    <scope>NUCLEOTIDE SEQUENCE [MRNA]</scope>
    <scope>IDENTIFICATION</scope>
    <scope>FUNCTION</scope>
    <scope>CATALYTIC ACTIVITY</scope>
    <scope>PATHWAY</scope>
</reference>
<reference key="2">
    <citation type="journal article" date="2016" name="J. Psychopharmacol.">
        <title>Rapid and sustained symptom reduction following psilocybin treatment for anxiety and depression in patients with life-threatening cancer: a randomized controlled trial.</title>
        <authorList>
            <person name="Ross S."/>
            <person name="Bossis A."/>
            <person name="Guss J."/>
            <person name="Agin-Liebes G."/>
            <person name="Malone T."/>
            <person name="Cohen B."/>
            <person name="Mennenga S.E."/>
            <person name="Belser A."/>
            <person name="Kalliontzi K."/>
            <person name="Babb J."/>
            <person name="Su Z."/>
            <person name="Corby P."/>
            <person name="Schmidt B.L."/>
        </authorList>
    </citation>
    <scope>BIOTECHNOLOGY</scope>
</reference>
<reference key="3">
    <citation type="journal article" date="2019" name="ChemBioChem">
        <title>Enzymatic route toward 6-methylated baeocystin and psilocybin.</title>
        <authorList>
            <person name="Fricke J."/>
            <person name="Sherwood A."/>
            <person name="Kargbo R."/>
            <person name="Orry A."/>
            <person name="Blei F."/>
            <person name="Naschberger A."/>
            <person name="Rupp B."/>
            <person name="Hoffmeister D."/>
        </authorList>
    </citation>
    <scope>FUNCTION</scope>
    <scope>CATALYTIC ACTIVITY</scope>
    <scope>MUTAGENESIS OF ARG-75; ASP-161; ASN-183; TYR-187; SER-196 AND HIS-210</scope>
    <scope>DOMAIN</scope>
    <scope>SUBUNIT</scope>
</reference>
<reference evidence="15 16 17 18" key="4">
    <citation type="journal article" date="2024" name="ChemBioChem">
        <title>The second methylation in psilocybin biosynthesis is enabled by a hydrogen bonding network extending into the secondary sphere surrounding the methyltransferase active site.</title>
        <authorList>
            <person name="Hudspeth J."/>
            <person name="Rogge K."/>
            <person name="Wagner T."/>
            <person name="Muell M."/>
            <person name="Hoffmeister D."/>
            <person name="Rupp B."/>
            <person name="Werten S."/>
        </authorList>
    </citation>
    <scope>X-RAY CRYSTALLOGRAPHY (0.9 ANGSTROMS) IN COMPLEX WITH S-ADENOSYL-L-HOMOCYSTEINE AND NORBAEOCYSTIN</scope>
    <scope>FUNCTION</scope>
    <scope>CATALYTIC ACTIVITY</scope>
    <scope>BIOPHYSICOCHEMICAL PROPERTIES</scope>
    <scope>MUTAGENESIS OF ASN-247</scope>
    <scope>DOMAIN</scope>
</reference>
<reference evidence="8 9 10 11 12 13 14" key="5">
    <citation type="journal article" date="2024" name="Nat. Commun.">
        <title>Methyl transfer in psilocybin biosynthesis.</title>
        <authorList>
            <person name="Hudspeth J."/>
            <person name="Rogge K."/>
            <person name="Dorner S."/>
            <person name="Mull M."/>
            <person name="Hoffmeister D."/>
            <person name="Rupp B."/>
            <person name="Werten S."/>
        </authorList>
    </citation>
    <scope>X-RAY CRYSTALLOGRAPHY (0.89 ANGSTROMS) IN COMPLEX WITH MG(2+); S-ADENOSYL-L-HOMOCYSTEINE; NORBAEOCYSTIN AND BAEOCYSTIN</scope>
    <scope>FUNCTION</scope>
    <scope>CATALYTIC ACTIVITY</scope>
    <scope>BIOPHYSICOCHEMICAL PROPERTIES</scope>
    <scope>MUTAGENESIS OF ASN-247</scope>
</reference>
<proteinExistence type="evidence at protein level"/>